<keyword id="KW-0963">Cytoplasm</keyword>
<keyword id="KW-0413">Isomerase</keyword>
<keyword id="KW-0627">Porphyrin biosynthesis</keyword>
<keyword id="KW-0663">Pyridoxal phosphate</keyword>
<protein>
    <recommendedName>
        <fullName evidence="1">Glutamate-1-semialdehyde 2,1-aminomutase</fullName>
        <shortName evidence="1">GSA</shortName>
        <ecNumber evidence="1">5.4.3.8</ecNumber>
    </recommendedName>
    <alternativeName>
        <fullName evidence="1">Glutamate-1-semialdehyde aminotransferase</fullName>
        <shortName evidence="1">GSA-AT</shortName>
    </alternativeName>
</protein>
<reference key="1">
    <citation type="submission" date="2007-02" db="EMBL/GenBank/DDBJ databases">
        <title>Complete sequence of chromosome of Yersinia pestis Pestoides F.</title>
        <authorList>
            <consortium name="US DOE Joint Genome Institute"/>
            <person name="Copeland A."/>
            <person name="Lucas S."/>
            <person name="Lapidus A."/>
            <person name="Barry K."/>
            <person name="Detter J.C."/>
            <person name="Glavina del Rio T."/>
            <person name="Hammon N."/>
            <person name="Israni S."/>
            <person name="Dalin E."/>
            <person name="Tice H."/>
            <person name="Pitluck S."/>
            <person name="Di Bartolo G."/>
            <person name="Chain P."/>
            <person name="Malfatti S."/>
            <person name="Shin M."/>
            <person name="Vergez L."/>
            <person name="Schmutz J."/>
            <person name="Larimer F."/>
            <person name="Land M."/>
            <person name="Hauser L."/>
            <person name="Worsham P."/>
            <person name="Chu M."/>
            <person name="Bearden S."/>
            <person name="Garcia E."/>
            <person name="Richardson P."/>
        </authorList>
    </citation>
    <scope>NUCLEOTIDE SEQUENCE [LARGE SCALE GENOMIC DNA]</scope>
    <source>
        <strain>Pestoides F</strain>
    </source>
</reference>
<proteinExistence type="inferred from homology"/>
<comment type="catalytic activity">
    <reaction evidence="1">
        <text>(S)-4-amino-5-oxopentanoate = 5-aminolevulinate</text>
        <dbReference type="Rhea" id="RHEA:14265"/>
        <dbReference type="ChEBI" id="CHEBI:57501"/>
        <dbReference type="ChEBI" id="CHEBI:356416"/>
        <dbReference type="EC" id="5.4.3.8"/>
    </reaction>
</comment>
<comment type="cofactor">
    <cofactor evidence="1">
        <name>pyridoxal 5'-phosphate</name>
        <dbReference type="ChEBI" id="CHEBI:597326"/>
    </cofactor>
</comment>
<comment type="pathway">
    <text evidence="1">Porphyrin-containing compound metabolism; protoporphyrin-IX biosynthesis; 5-aminolevulinate from L-glutamyl-tRNA(Glu): step 2/2.</text>
</comment>
<comment type="subunit">
    <text evidence="1">Homodimer.</text>
</comment>
<comment type="subcellular location">
    <subcellularLocation>
        <location evidence="1">Cytoplasm</location>
    </subcellularLocation>
</comment>
<comment type="similarity">
    <text evidence="1">Belongs to the class-III pyridoxal-phosphate-dependent aminotransferase family. HemL subfamily.</text>
</comment>
<evidence type="ECO:0000255" key="1">
    <source>
        <dbReference type="HAMAP-Rule" id="MF_00375"/>
    </source>
</evidence>
<dbReference type="EC" id="5.4.3.8" evidence="1"/>
<dbReference type="EMBL" id="CP000668">
    <property type="protein sequence ID" value="ABP41328.1"/>
    <property type="molecule type" value="Genomic_DNA"/>
</dbReference>
<dbReference type="RefSeq" id="WP_002209362.1">
    <property type="nucleotide sequence ID" value="NZ_CP009715.1"/>
</dbReference>
<dbReference type="SMR" id="A4TPW6"/>
<dbReference type="GeneID" id="57975320"/>
<dbReference type="KEGG" id="ypp:YPDSF_2968"/>
<dbReference type="PATRIC" id="fig|386656.14.peg.1396"/>
<dbReference type="UniPathway" id="UPA00251">
    <property type="reaction ID" value="UER00317"/>
</dbReference>
<dbReference type="GO" id="GO:0005737">
    <property type="term" value="C:cytoplasm"/>
    <property type="evidence" value="ECO:0007669"/>
    <property type="project" value="UniProtKB-SubCell"/>
</dbReference>
<dbReference type="GO" id="GO:0042286">
    <property type="term" value="F:glutamate-1-semialdehyde 2,1-aminomutase activity"/>
    <property type="evidence" value="ECO:0007669"/>
    <property type="project" value="UniProtKB-UniRule"/>
</dbReference>
<dbReference type="GO" id="GO:0030170">
    <property type="term" value="F:pyridoxal phosphate binding"/>
    <property type="evidence" value="ECO:0007669"/>
    <property type="project" value="InterPro"/>
</dbReference>
<dbReference type="GO" id="GO:0008483">
    <property type="term" value="F:transaminase activity"/>
    <property type="evidence" value="ECO:0007669"/>
    <property type="project" value="InterPro"/>
</dbReference>
<dbReference type="GO" id="GO:0006782">
    <property type="term" value="P:protoporphyrinogen IX biosynthetic process"/>
    <property type="evidence" value="ECO:0007669"/>
    <property type="project" value="UniProtKB-UniRule"/>
</dbReference>
<dbReference type="CDD" id="cd00610">
    <property type="entry name" value="OAT_like"/>
    <property type="match status" value="1"/>
</dbReference>
<dbReference type="FunFam" id="3.40.640.10:FF:000021">
    <property type="entry name" value="Glutamate-1-semialdehyde 2,1-aminomutase"/>
    <property type="match status" value="1"/>
</dbReference>
<dbReference type="FunFam" id="3.90.1150.10:FF:000012">
    <property type="entry name" value="Glutamate-1-semialdehyde 2,1-aminomutase"/>
    <property type="match status" value="1"/>
</dbReference>
<dbReference type="Gene3D" id="3.90.1150.10">
    <property type="entry name" value="Aspartate Aminotransferase, domain 1"/>
    <property type="match status" value="1"/>
</dbReference>
<dbReference type="Gene3D" id="3.40.640.10">
    <property type="entry name" value="Type I PLP-dependent aspartate aminotransferase-like (Major domain)"/>
    <property type="match status" value="1"/>
</dbReference>
<dbReference type="HAMAP" id="MF_00375">
    <property type="entry name" value="HemL_aminotrans_3"/>
    <property type="match status" value="1"/>
</dbReference>
<dbReference type="InterPro" id="IPR004639">
    <property type="entry name" value="4pyrrol_synth_GluAld_NH2Trfase"/>
</dbReference>
<dbReference type="InterPro" id="IPR005814">
    <property type="entry name" value="Aminotrans_3"/>
</dbReference>
<dbReference type="InterPro" id="IPR049704">
    <property type="entry name" value="Aminotrans_3_PPA_site"/>
</dbReference>
<dbReference type="InterPro" id="IPR015424">
    <property type="entry name" value="PyrdxlP-dep_Trfase"/>
</dbReference>
<dbReference type="InterPro" id="IPR015421">
    <property type="entry name" value="PyrdxlP-dep_Trfase_major"/>
</dbReference>
<dbReference type="InterPro" id="IPR015422">
    <property type="entry name" value="PyrdxlP-dep_Trfase_small"/>
</dbReference>
<dbReference type="NCBIfam" id="TIGR00713">
    <property type="entry name" value="hemL"/>
    <property type="match status" value="1"/>
</dbReference>
<dbReference type="NCBIfam" id="NF000818">
    <property type="entry name" value="PRK00062.1"/>
    <property type="match status" value="1"/>
</dbReference>
<dbReference type="PANTHER" id="PTHR43713">
    <property type="entry name" value="GLUTAMATE-1-SEMIALDEHYDE 2,1-AMINOMUTASE"/>
    <property type="match status" value="1"/>
</dbReference>
<dbReference type="PANTHER" id="PTHR43713:SF3">
    <property type="entry name" value="GLUTAMATE-1-SEMIALDEHYDE 2,1-AMINOMUTASE 1, CHLOROPLASTIC-RELATED"/>
    <property type="match status" value="1"/>
</dbReference>
<dbReference type="Pfam" id="PF00202">
    <property type="entry name" value="Aminotran_3"/>
    <property type="match status" value="1"/>
</dbReference>
<dbReference type="SUPFAM" id="SSF53383">
    <property type="entry name" value="PLP-dependent transferases"/>
    <property type="match status" value="1"/>
</dbReference>
<dbReference type="PROSITE" id="PS00600">
    <property type="entry name" value="AA_TRANSFER_CLASS_3"/>
    <property type="match status" value="1"/>
</dbReference>
<sequence>MSKSENLYAQAQQLIPGGVNSPVRAFTGVGGIPLFIERADGAYLFDVDGKAYIDYVGSWGPMILGHNHPAIRQAVIEAVERGLSFGAPTEMEVKMAQLVTDLVPTMDMVRMVNSGTEATMSAIRLARGYTGRDKIIKFEGCYHGHADCLLVKAGSGALTLGQPNSPGVPTDFAKHTLTCTYNDLASVRQAFEQYPQEVACIIVEPVAGNMNCIPPLPEFLPGLRALCDEFGALLIIDEVMTGFRVALAGAQDYYHVIPDLTCLGKIIGGGMPVGAFGGRREVMNALAPTGPVYQAGTLSGNPIAMAAGFACLTEISQVGVYETLTELTDSLATGLRHAAKEENIPLVVNHVGGMFGLFFTNADTVTCYQDVMNCDVERFKRFFHLMLEEGVYLAPSAFEAGFMSLAHSNEDIQKTVNAARRCFAKL</sequence>
<gene>
    <name evidence="1" type="primary">hemL</name>
    <name type="ordered locus">YPDSF_2968</name>
</gene>
<feature type="chain" id="PRO_0000300962" description="Glutamate-1-semialdehyde 2,1-aminomutase">
    <location>
        <begin position="1"/>
        <end position="426"/>
    </location>
</feature>
<feature type="modified residue" description="N6-(pyridoxal phosphate)lysine" evidence="1">
    <location>
        <position position="265"/>
    </location>
</feature>
<organism>
    <name type="scientific">Yersinia pestis (strain Pestoides F)</name>
    <dbReference type="NCBI Taxonomy" id="386656"/>
    <lineage>
        <taxon>Bacteria</taxon>
        <taxon>Pseudomonadati</taxon>
        <taxon>Pseudomonadota</taxon>
        <taxon>Gammaproteobacteria</taxon>
        <taxon>Enterobacterales</taxon>
        <taxon>Yersiniaceae</taxon>
        <taxon>Yersinia</taxon>
    </lineage>
</organism>
<accession>A4TPW6</accession>
<name>GSA_YERPP</name>